<gene>
    <name evidence="1" type="primary">rlmH</name>
    <name type="ordered locus">CD630_36490</name>
</gene>
<name>RLMH_CLOD6</name>
<feature type="chain" id="PRO_0000260545" description="Ribosomal RNA large subunit methyltransferase H">
    <location>
        <begin position="1"/>
        <end position="159"/>
    </location>
</feature>
<feature type="binding site" evidence="1">
    <location>
        <position position="76"/>
    </location>
    <ligand>
        <name>S-adenosyl-L-methionine</name>
        <dbReference type="ChEBI" id="CHEBI:59789"/>
    </ligand>
</feature>
<feature type="binding site" evidence="1">
    <location>
        <position position="108"/>
    </location>
    <ligand>
        <name>S-adenosyl-L-methionine</name>
        <dbReference type="ChEBI" id="CHEBI:59789"/>
    </ligand>
</feature>
<feature type="binding site" evidence="1">
    <location>
        <begin position="127"/>
        <end position="132"/>
    </location>
    <ligand>
        <name>S-adenosyl-L-methionine</name>
        <dbReference type="ChEBI" id="CHEBI:59789"/>
    </ligand>
</feature>
<dbReference type="EC" id="2.1.1.177" evidence="1"/>
<dbReference type="EMBL" id="AM180355">
    <property type="protein sequence ID" value="CAJ70557.1"/>
    <property type="molecule type" value="Genomic_DNA"/>
</dbReference>
<dbReference type="RefSeq" id="WP_003435703.1">
    <property type="nucleotide sequence ID" value="NZ_JAUPES010000007.1"/>
</dbReference>
<dbReference type="RefSeq" id="YP_001090173.1">
    <property type="nucleotide sequence ID" value="NC_009089.1"/>
</dbReference>
<dbReference type="SMR" id="Q181Q1"/>
<dbReference type="STRING" id="272563.CD630_36490"/>
<dbReference type="EnsemblBacteria" id="CAJ70557">
    <property type="protein sequence ID" value="CAJ70557"/>
    <property type="gene ID" value="CD630_36490"/>
</dbReference>
<dbReference type="KEGG" id="cdf:CD630_36490"/>
<dbReference type="KEGG" id="pdc:CDIF630_03973"/>
<dbReference type="PATRIC" id="fig|272563.120.peg.3859"/>
<dbReference type="eggNOG" id="COG1576">
    <property type="taxonomic scope" value="Bacteria"/>
</dbReference>
<dbReference type="OrthoDB" id="9806643at2"/>
<dbReference type="PhylomeDB" id="Q181Q1"/>
<dbReference type="BioCyc" id="PDIF272563:G12WB-3836-MONOMER"/>
<dbReference type="Proteomes" id="UP000001978">
    <property type="component" value="Chromosome"/>
</dbReference>
<dbReference type="GO" id="GO:0005737">
    <property type="term" value="C:cytoplasm"/>
    <property type="evidence" value="ECO:0007669"/>
    <property type="project" value="UniProtKB-SubCell"/>
</dbReference>
<dbReference type="GO" id="GO:0070038">
    <property type="term" value="F:rRNA (pseudouridine-N3-)-methyltransferase activity"/>
    <property type="evidence" value="ECO:0007669"/>
    <property type="project" value="UniProtKB-UniRule"/>
</dbReference>
<dbReference type="CDD" id="cd18081">
    <property type="entry name" value="RlmH-like"/>
    <property type="match status" value="1"/>
</dbReference>
<dbReference type="Gene3D" id="3.40.1280.10">
    <property type="match status" value="1"/>
</dbReference>
<dbReference type="HAMAP" id="MF_00658">
    <property type="entry name" value="23SrRNA_methyltr_H"/>
    <property type="match status" value="1"/>
</dbReference>
<dbReference type="InterPro" id="IPR029028">
    <property type="entry name" value="Alpha/beta_knot_MTases"/>
</dbReference>
<dbReference type="InterPro" id="IPR003742">
    <property type="entry name" value="RlmH-like"/>
</dbReference>
<dbReference type="InterPro" id="IPR029026">
    <property type="entry name" value="tRNA_m1G_MTases_N"/>
</dbReference>
<dbReference type="NCBIfam" id="NF000985">
    <property type="entry name" value="PRK00103.1-3"/>
    <property type="match status" value="1"/>
</dbReference>
<dbReference type="NCBIfam" id="TIGR00246">
    <property type="entry name" value="tRNA_RlmH_YbeA"/>
    <property type="match status" value="1"/>
</dbReference>
<dbReference type="PANTHER" id="PTHR33603">
    <property type="entry name" value="METHYLTRANSFERASE"/>
    <property type="match status" value="1"/>
</dbReference>
<dbReference type="PANTHER" id="PTHR33603:SF1">
    <property type="entry name" value="RIBOSOMAL RNA LARGE SUBUNIT METHYLTRANSFERASE H"/>
    <property type="match status" value="1"/>
</dbReference>
<dbReference type="Pfam" id="PF02590">
    <property type="entry name" value="SPOUT_MTase"/>
    <property type="match status" value="1"/>
</dbReference>
<dbReference type="PIRSF" id="PIRSF004505">
    <property type="entry name" value="MT_bac"/>
    <property type="match status" value="1"/>
</dbReference>
<dbReference type="SUPFAM" id="SSF75217">
    <property type="entry name" value="alpha/beta knot"/>
    <property type="match status" value="1"/>
</dbReference>
<reference key="1">
    <citation type="journal article" date="2006" name="Nat. Genet.">
        <title>The multidrug-resistant human pathogen Clostridium difficile has a highly mobile, mosaic genome.</title>
        <authorList>
            <person name="Sebaihia M."/>
            <person name="Wren B.W."/>
            <person name="Mullany P."/>
            <person name="Fairweather N.F."/>
            <person name="Minton N."/>
            <person name="Stabler R."/>
            <person name="Thomson N.R."/>
            <person name="Roberts A.P."/>
            <person name="Cerdeno-Tarraga A.M."/>
            <person name="Wang H."/>
            <person name="Holden M.T.G."/>
            <person name="Wright A."/>
            <person name="Churcher C."/>
            <person name="Quail M.A."/>
            <person name="Baker S."/>
            <person name="Bason N."/>
            <person name="Brooks K."/>
            <person name="Chillingworth T."/>
            <person name="Cronin A."/>
            <person name="Davis P."/>
            <person name="Dowd L."/>
            <person name="Fraser A."/>
            <person name="Feltwell T."/>
            <person name="Hance Z."/>
            <person name="Holroyd S."/>
            <person name="Jagels K."/>
            <person name="Moule S."/>
            <person name="Mungall K."/>
            <person name="Price C."/>
            <person name="Rabbinowitsch E."/>
            <person name="Sharp S."/>
            <person name="Simmonds M."/>
            <person name="Stevens K."/>
            <person name="Unwin L."/>
            <person name="Whithead S."/>
            <person name="Dupuy B."/>
            <person name="Dougan G."/>
            <person name="Barrell B."/>
            <person name="Parkhill J."/>
        </authorList>
    </citation>
    <scope>NUCLEOTIDE SEQUENCE [LARGE SCALE GENOMIC DNA]</scope>
    <source>
        <strain>630</strain>
    </source>
</reference>
<evidence type="ECO:0000255" key="1">
    <source>
        <dbReference type="HAMAP-Rule" id="MF_00658"/>
    </source>
</evidence>
<keyword id="KW-0963">Cytoplasm</keyword>
<keyword id="KW-0489">Methyltransferase</keyword>
<keyword id="KW-1185">Reference proteome</keyword>
<keyword id="KW-0698">rRNA processing</keyword>
<keyword id="KW-0949">S-adenosyl-L-methionine</keyword>
<keyword id="KW-0808">Transferase</keyword>
<organism>
    <name type="scientific">Clostridioides difficile (strain 630)</name>
    <name type="common">Peptoclostridium difficile</name>
    <dbReference type="NCBI Taxonomy" id="272563"/>
    <lineage>
        <taxon>Bacteria</taxon>
        <taxon>Bacillati</taxon>
        <taxon>Bacillota</taxon>
        <taxon>Clostridia</taxon>
        <taxon>Peptostreptococcales</taxon>
        <taxon>Peptostreptococcaceae</taxon>
        <taxon>Clostridioides</taxon>
    </lineage>
</organism>
<accession>Q181Q1</accession>
<sequence length="159" mass="18083">MNISIVVVGKIKEKYLKLGIDEFKKRLSKYCKLEIIELDDEKAPENLSVKEMEIIKDKEGKKILGKIKHNSYVIALAIDGKGLSSEELAKTMSDLAVRGNSSLCFIIGGSLGLSDEVLGRADYRLSFSRMTFPHQMMRLILLEQIYRAYRINNGEPYHK</sequence>
<protein>
    <recommendedName>
        <fullName evidence="1">Ribosomal RNA large subunit methyltransferase H</fullName>
        <ecNumber evidence="1">2.1.1.177</ecNumber>
    </recommendedName>
    <alternativeName>
        <fullName evidence="1">23S rRNA (pseudouridine1915-N3)-methyltransferase</fullName>
    </alternativeName>
    <alternativeName>
        <fullName evidence="1">23S rRNA m3Psi1915 methyltransferase</fullName>
    </alternativeName>
    <alternativeName>
        <fullName evidence="1">rRNA (pseudouridine-N3-)-methyltransferase RlmH</fullName>
    </alternativeName>
</protein>
<comment type="function">
    <text evidence="1">Specifically methylates the pseudouridine at position 1915 (m3Psi1915) in 23S rRNA.</text>
</comment>
<comment type="catalytic activity">
    <reaction evidence="1">
        <text>pseudouridine(1915) in 23S rRNA + S-adenosyl-L-methionine = N(3)-methylpseudouridine(1915) in 23S rRNA + S-adenosyl-L-homocysteine + H(+)</text>
        <dbReference type="Rhea" id="RHEA:42752"/>
        <dbReference type="Rhea" id="RHEA-COMP:10221"/>
        <dbReference type="Rhea" id="RHEA-COMP:10222"/>
        <dbReference type="ChEBI" id="CHEBI:15378"/>
        <dbReference type="ChEBI" id="CHEBI:57856"/>
        <dbReference type="ChEBI" id="CHEBI:59789"/>
        <dbReference type="ChEBI" id="CHEBI:65314"/>
        <dbReference type="ChEBI" id="CHEBI:74486"/>
        <dbReference type="EC" id="2.1.1.177"/>
    </reaction>
</comment>
<comment type="subunit">
    <text evidence="1">Homodimer.</text>
</comment>
<comment type="subcellular location">
    <subcellularLocation>
        <location evidence="1">Cytoplasm</location>
    </subcellularLocation>
</comment>
<comment type="similarity">
    <text evidence="1">Belongs to the RNA methyltransferase RlmH family.</text>
</comment>
<proteinExistence type="inferred from homology"/>